<keyword id="KW-0963">Cytoplasm</keyword>
<keyword id="KW-0479">Metal-binding</keyword>
<keyword id="KW-0560">Oxidoreductase</keyword>
<keyword id="KW-1185">Reference proteome</keyword>
<keyword id="KW-0862">Zinc</keyword>
<sequence length="92" mass="10459">MASLVPCPNCGRRPKEEFTIKGAALSRPEADADSIDWFDYVYLRENPRGAYEEYWHHTSGCRRWLVVARDTVTHEIAACCDAAGRARSEARK</sequence>
<name>TSOXD_RHIME</name>
<protein>
    <recommendedName>
        <fullName evidence="1">Sarcosine oxidase subunit delta</fullName>
        <shortName evidence="1">Sarcosine oxidase subunit D</shortName>
        <ecNumber evidence="1">1.5.3.24</ecNumber>
    </recommendedName>
    <alternativeName>
        <fullName evidence="1">Sarcosine oxidase (5,10-methylenetetrahydrofolate-forming) subunit delta</fullName>
    </alternativeName>
    <alternativeName>
        <fullName evidence="1">Tetrameric sarcosine oxidase subunit delta</fullName>
        <shortName evidence="1">TSOX subunit delta</shortName>
    </alternativeName>
</protein>
<gene>
    <name type="primary">soxD</name>
    <name type="ordered locus">R00084</name>
    <name type="ORF">SMc02607</name>
</gene>
<comment type="function">
    <text evidence="1">In the presence of tetrahydrofolate, catalyzes the oxidative demethylation of sarcosine to yield glycine, 5,10-methylenetetrahydrofolate and hydrogen peroxide (By similarity). In the absence of tetrahydrofolate, catalyzes the oxidative demethylation of sarcosine to yield glycine, formaldehyde and hydrogen peroxide (By similarity).</text>
</comment>
<comment type="catalytic activity">
    <reaction evidence="1">
        <text>sarcosine + (6S)-5,6,7,8-tetrahydrofolate + O2 = (6R)-5,10-methylene-5,6,7,8-tetrahydrofolate + glycine + H2O2</text>
        <dbReference type="Rhea" id="RHEA:70455"/>
        <dbReference type="ChEBI" id="CHEBI:15379"/>
        <dbReference type="ChEBI" id="CHEBI:15636"/>
        <dbReference type="ChEBI" id="CHEBI:16240"/>
        <dbReference type="ChEBI" id="CHEBI:57305"/>
        <dbReference type="ChEBI" id="CHEBI:57433"/>
        <dbReference type="ChEBI" id="CHEBI:57453"/>
        <dbReference type="EC" id="1.5.3.24"/>
    </reaction>
</comment>
<comment type="catalytic activity">
    <reaction evidence="1">
        <text>sarcosine + O2 + H2O = formaldehyde + glycine + H2O2</text>
        <dbReference type="Rhea" id="RHEA:13313"/>
        <dbReference type="ChEBI" id="CHEBI:15377"/>
        <dbReference type="ChEBI" id="CHEBI:15379"/>
        <dbReference type="ChEBI" id="CHEBI:16240"/>
        <dbReference type="ChEBI" id="CHEBI:16842"/>
        <dbReference type="ChEBI" id="CHEBI:57305"/>
        <dbReference type="ChEBI" id="CHEBI:57433"/>
    </reaction>
</comment>
<comment type="subunit">
    <text evidence="1">Heterotetramer composed of subunits alpha (SoxA), beta (SoxB), gamma (SoxG) and delta (SoxD).</text>
</comment>
<comment type="subcellular location">
    <subcellularLocation>
        <location evidence="1">Cytoplasm</location>
    </subcellularLocation>
</comment>
<comment type="similarity">
    <text evidence="3">Belongs to the SoxD family.</text>
</comment>
<evidence type="ECO:0000250" key="1">
    <source>
        <dbReference type="UniProtKB" id="Q46336"/>
    </source>
</evidence>
<evidence type="ECO:0000250" key="2">
    <source>
        <dbReference type="UniProtKB" id="Q50LF1"/>
    </source>
</evidence>
<evidence type="ECO:0000305" key="3"/>
<feature type="chain" id="PRO_0000072050" description="Sarcosine oxidase subunit delta">
    <location>
        <begin position="1"/>
        <end position="92"/>
    </location>
</feature>
<feature type="binding site" evidence="2">
    <location>
        <position position="7"/>
    </location>
    <ligand>
        <name>Zn(2+)</name>
        <dbReference type="ChEBI" id="CHEBI:29105"/>
    </ligand>
</feature>
<feature type="binding site" evidence="2">
    <location>
        <position position="10"/>
    </location>
    <ligand>
        <name>Zn(2+)</name>
        <dbReference type="ChEBI" id="CHEBI:29105"/>
    </ligand>
</feature>
<feature type="binding site" evidence="2">
    <location>
        <position position="57"/>
    </location>
    <ligand>
        <name>Zn(2+)</name>
        <dbReference type="ChEBI" id="CHEBI:29105"/>
    </ligand>
</feature>
<feature type="binding site" evidence="2">
    <location>
        <position position="61"/>
    </location>
    <ligand>
        <name>Zn(2+)</name>
        <dbReference type="ChEBI" id="CHEBI:29105"/>
    </ligand>
</feature>
<dbReference type="EC" id="1.5.3.24" evidence="1"/>
<dbReference type="EMBL" id="AF055582">
    <property type="protein sequence ID" value="AAC62217.1"/>
    <property type="molecule type" value="Genomic_DNA"/>
</dbReference>
<dbReference type="EMBL" id="AL591688">
    <property type="protein sequence ID" value="CAC41471.1"/>
    <property type="molecule type" value="Genomic_DNA"/>
</dbReference>
<dbReference type="RefSeq" id="NP_384190.1">
    <property type="nucleotide sequence ID" value="NC_003047.1"/>
</dbReference>
<dbReference type="RefSeq" id="WP_010968345.1">
    <property type="nucleotide sequence ID" value="NC_003047.1"/>
</dbReference>
<dbReference type="SMR" id="O87387"/>
<dbReference type="EnsemblBacteria" id="CAC41471">
    <property type="protein sequence ID" value="CAC41471"/>
    <property type="gene ID" value="SMc02607"/>
</dbReference>
<dbReference type="KEGG" id="sme:SMc02607"/>
<dbReference type="PATRIC" id="fig|266834.11.peg.1441"/>
<dbReference type="eggNOG" id="COG4311">
    <property type="taxonomic scope" value="Bacteria"/>
</dbReference>
<dbReference type="HOGENOM" id="CLU_156359_1_1_5"/>
<dbReference type="OrthoDB" id="5420070at2"/>
<dbReference type="Proteomes" id="UP000001976">
    <property type="component" value="Chromosome"/>
</dbReference>
<dbReference type="GO" id="GO:0005737">
    <property type="term" value="C:cytoplasm"/>
    <property type="evidence" value="ECO:0007669"/>
    <property type="project" value="UniProtKB-SubCell"/>
</dbReference>
<dbReference type="GO" id="GO:0046872">
    <property type="term" value="F:metal ion binding"/>
    <property type="evidence" value="ECO:0007669"/>
    <property type="project" value="UniProtKB-KW"/>
</dbReference>
<dbReference type="GO" id="GO:0008115">
    <property type="term" value="F:sarcosine oxidase activity"/>
    <property type="evidence" value="ECO:0007669"/>
    <property type="project" value="UniProtKB-EC"/>
</dbReference>
<dbReference type="GO" id="GO:0046653">
    <property type="term" value="P:tetrahydrofolate metabolic process"/>
    <property type="evidence" value="ECO:0007669"/>
    <property type="project" value="InterPro"/>
</dbReference>
<dbReference type="Gene3D" id="3.30.2270.10">
    <property type="entry name" value="Folate-binding superfamily"/>
    <property type="match status" value="1"/>
</dbReference>
<dbReference type="InterPro" id="IPR006279">
    <property type="entry name" value="SoxD"/>
</dbReference>
<dbReference type="InterPro" id="IPR038561">
    <property type="entry name" value="SoxD_sf"/>
</dbReference>
<dbReference type="NCBIfam" id="TIGR01374">
    <property type="entry name" value="soxD"/>
    <property type="match status" value="1"/>
</dbReference>
<dbReference type="Pfam" id="PF04267">
    <property type="entry name" value="SoxD"/>
    <property type="match status" value="1"/>
</dbReference>
<proteinExistence type="inferred from homology"/>
<organism>
    <name type="scientific">Rhizobium meliloti (strain 1021)</name>
    <name type="common">Ensifer meliloti</name>
    <name type="synonym">Sinorhizobium meliloti</name>
    <dbReference type="NCBI Taxonomy" id="266834"/>
    <lineage>
        <taxon>Bacteria</taxon>
        <taxon>Pseudomonadati</taxon>
        <taxon>Pseudomonadota</taxon>
        <taxon>Alphaproteobacteria</taxon>
        <taxon>Hyphomicrobiales</taxon>
        <taxon>Rhizobiaceae</taxon>
        <taxon>Sinorhizobium/Ensifer group</taxon>
        <taxon>Sinorhizobium</taxon>
    </lineage>
</organism>
<accession>O87387</accession>
<reference key="1">
    <citation type="submission" date="1998-03" db="EMBL/GenBank/DDBJ databases">
        <authorList>
            <person name="Powers E.L."/>
            <person name="Vuyyuru V."/>
            <person name="Kahn M.L."/>
        </authorList>
    </citation>
    <scope>NUCLEOTIDE SEQUENCE [GENOMIC DNA]</scope>
    <source>
        <strain>1021</strain>
    </source>
</reference>
<reference key="2">
    <citation type="journal article" date="2001" name="Proc. Natl. Acad. Sci. U.S.A.">
        <title>Analysis of the chromosome sequence of the legume symbiont Sinorhizobium meliloti strain 1021.</title>
        <authorList>
            <person name="Capela D."/>
            <person name="Barloy-Hubler F."/>
            <person name="Gouzy J."/>
            <person name="Bothe G."/>
            <person name="Ampe F."/>
            <person name="Batut J."/>
            <person name="Boistard P."/>
            <person name="Becker A."/>
            <person name="Boutry M."/>
            <person name="Cadieu E."/>
            <person name="Dreano S."/>
            <person name="Gloux S."/>
            <person name="Godrie T."/>
            <person name="Goffeau A."/>
            <person name="Kahn D."/>
            <person name="Kiss E."/>
            <person name="Lelaure V."/>
            <person name="Masuy D."/>
            <person name="Pohl T."/>
            <person name="Portetelle D."/>
            <person name="Puehler A."/>
            <person name="Purnelle B."/>
            <person name="Ramsperger U."/>
            <person name="Renard C."/>
            <person name="Thebault P."/>
            <person name="Vandenbol M."/>
            <person name="Weidner S."/>
            <person name="Galibert F."/>
        </authorList>
    </citation>
    <scope>NUCLEOTIDE SEQUENCE [LARGE SCALE GENOMIC DNA]</scope>
    <source>
        <strain>1021</strain>
    </source>
</reference>
<reference key="3">
    <citation type="journal article" date="2001" name="Science">
        <title>The composite genome of the legume symbiont Sinorhizobium meliloti.</title>
        <authorList>
            <person name="Galibert F."/>
            <person name="Finan T.M."/>
            <person name="Long S.R."/>
            <person name="Puehler A."/>
            <person name="Abola P."/>
            <person name="Ampe F."/>
            <person name="Barloy-Hubler F."/>
            <person name="Barnett M.J."/>
            <person name="Becker A."/>
            <person name="Boistard P."/>
            <person name="Bothe G."/>
            <person name="Boutry M."/>
            <person name="Bowser L."/>
            <person name="Buhrmester J."/>
            <person name="Cadieu E."/>
            <person name="Capela D."/>
            <person name="Chain P."/>
            <person name="Cowie A."/>
            <person name="Davis R.W."/>
            <person name="Dreano S."/>
            <person name="Federspiel N.A."/>
            <person name="Fisher R.F."/>
            <person name="Gloux S."/>
            <person name="Godrie T."/>
            <person name="Goffeau A."/>
            <person name="Golding B."/>
            <person name="Gouzy J."/>
            <person name="Gurjal M."/>
            <person name="Hernandez-Lucas I."/>
            <person name="Hong A."/>
            <person name="Huizar L."/>
            <person name="Hyman R.W."/>
            <person name="Jones T."/>
            <person name="Kahn D."/>
            <person name="Kahn M.L."/>
            <person name="Kalman S."/>
            <person name="Keating D.H."/>
            <person name="Kiss E."/>
            <person name="Komp C."/>
            <person name="Lelaure V."/>
            <person name="Masuy D."/>
            <person name="Palm C."/>
            <person name="Peck M.C."/>
            <person name="Pohl T.M."/>
            <person name="Portetelle D."/>
            <person name="Purnelle B."/>
            <person name="Ramsperger U."/>
            <person name="Surzycki R."/>
            <person name="Thebault P."/>
            <person name="Vandenbol M."/>
            <person name="Vorhoelter F.J."/>
            <person name="Weidner S."/>
            <person name="Wells D.H."/>
            <person name="Wong K."/>
            <person name="Yeh K.-C."/>
            <person name="Batut J."/>
        </authorList>
    </citation>
    <scope>NUCLEOTIDE SEQUENCE [LARGE SCALE GENOMIC DNA]</scope>
    <source>
        <strain>1021</strain>
    </source>
</reference>